<organism>
    <name type="scientific">Homo sapiens</name>
    <name type="common">Human</name>
    <dbReference type="NCBI Taxonomy" id="9606"/>
    <lineage>
        <taxon>Eukaryota</taxon>
        <taxon>Metazoa</taxon>
        <taxon>Chordata</taxon>
        <taxon>Craniata</taxon>
        <taxon>Vertebrata</taxon>
        <taxon>Euteleostomi</taxon>
        <taxon>Mammalia</taxon>
        <taxon>Eutheria</taxon>
        <taxon>Euarchontoglires</taxon>
        <taxon>Primates</taxon>
        <taxon>Haplorrhini</taxon>
        <taxon>Catarrhini</taxon>
        <taxon>Hominidae</taxon>
        <taxon>Homo</taxon>
    </lineage>
</organism>
<name>SNX3_HUMAN</name>
<accession>O60493</accession>
<accession>A8K0B1</accession>
<accession>E1P5E4</accession>
<accession>E1P5E5</accession>
<accession>O60718</accession>
<accession>Q4TT29</accession>
<accession>Q4TT31</accession>
<accession>Q5JXJ7</accession>
<accession>Q5JXJ8</accession>
<accession>Q96AP9</accession>
<accession>Q9C0J5</accession>
<accession>Q9NU45</accession>
<gene>
    <name evidence="16 20" type="primary">SNX3</name>
</gene>
<comment type="function">
    <text evidence="2 4 8 10 11 12 19">Phosphoinositide-binding protein required for multivesicular body formation. Specifically binds phosphatidylinositol 3-phosphate (PtdIns(P3)). Can also bind phosphatidylinositol 4-phosphate (PtdIns(P4)), phosphatidylinositol 5-phosphate (PtdIns(P5)) and phosphatidylinositol 3,5-biphosphate (PtdIns(3,5)P2) (By similarity). Plays a role in protein transport between cellular compartments. Together with RAB7A facilitates endosome membrane association of the retromer cargo-selective subcomplex (CSC/VPS). May in part act as component of the SNX3-retromer complex which mediates the retrograde endosome-to-TGN transport of WLS distinct from the SNX-BAR retromer pathway (PubMed:21725319, PubMed:24344282, PubMed:30213940). Promotes stability and cell surface expression of epithelial sodium channel (ENAC) subunits SCNN1A and SCNN1G (By similarity). Not involved in EGFR degradation. Involved in the regulation of phagocytosis in dendritic cells possibly by regulating EEA1 recruitment to the nascent phagosomes (PubMed:23237080). Involved in iron homeostasis through regulation of endocytic recycling of the transferrin receptor TFRC presumably by delivering the transferrin:transferrin receptor complex to recycling endosomes; the function may involve the CSC retromer subcomplex (By similarity). In the case of Salmonella enterica infection plays arole in maturation of the Salmonella-containing vacuole (SCV) and promotes recruitment of LAMP1 to SCVs (PubMed:20482551).</text>
</comment>
<comment type="subunit">
    <text evidence="2 7 10 12 13 14 19">Interacts with VPS26A, VPS29 and VPS35; the interaction with VPS35 is direct. The association with the retromer CSC subcomplex subunits is proposed to represent a functional distinct retromer variant described as SNX3-retromer complex (PubMed:21725319, PubMed:24344282, PubMed:30213940). Interacts with USP10 and SCNN1A (By similarity). Interacts with TRFC (By similarity). Interacts with SNX8; 2 molecules of SNX8 seems to associate with one molecule of SNX3 (PubMed:24866125). Interacts with PTPRU (PubMed:17622474). Interacts with MON2 and DOP1B.</text>
</comment>
<comment type="interaction">
    <interactant intactId="EBI-727209">
        <id>O60493</id>
    </interactant>
    <interactant intactId="EBI-714543">
        <id>Q15041</id>
        <label>ARL6IP1</label>
    </interactant>
    <organismsDiffer>false</organismsDiffer>
    <experiments>3</experiments>
</comment>
<comment type="interaction">
    <interactant intactId="EBI-727209">
        <id>O60493</id>
    </interactant>
    <interactant intactId="EBI-886">
        <id>P46108</id>
        <label>CRK</label>
    </interactant>
    <organismsDiffer>false</organismsDiffer>
    <experiments>2</experiments>
</comment>
<comment type="interaction">
    <interactant intactId="EBI-727209">
        <id>O60493</id>
    </interactant>
    <interactant intactId="EBI-1052363">
        <id>Q9NS64</id>
        <label>RPRM</label>
    </interactant>
    <organismsDiffer>false</organismsDiffer>
    <experiments>3</experiments>
</comment>
<comment type="subcellular location">
    <subcellularLocation>
        <location evidence="4 10 14">Early endosome</location>
    </subcellularLocation>
    <subcellularLocation>
        <location evidence="11">Cytoplasmic vesicle</location>
        <location evidence="11">Phagosome</location>
    </subcellularLocation>
    <text evidence="9 10 11">Colocalizes to clathrin-coated endosomal vesicles morphologically distinct from retromer-decorated non-branched endosomal tubule structures (PubMed:21725319) Colocalizes with EEA1 on nascent phagosomes in dendritic cells but competes with EEA1 for binding to phagosomal membrane (PubMed:23237080). In the case of Salmonella enterica infection localizes to Salmonella-containing vacuoles (SCVs) from which SNX3-containing tubules form 30-60 minutes after infection (PubMed:20482551).</text>
</comment>
<comment type="alternative products">
    <event type="alternative splicing"/>
    <isoform>
        <id>O60493-1</id>
        <name>1</name>
        <sequence type="displayed"/>
    </isoform>
    <isoform>
        <id>O60493-2</id>
        <name>2</name>
        <name>SNX 3A</name>
        <sequence type="described" ref="VSP_006190"/>
    </isoform>
    <isoform>
        <id>O60493-3</id>
        <name>3</name>
        <sequence type="described" ref="VSP_012928"/>
    </isoform>
    <isoform>
        <id>O60493-4</id>
        <name>4</name>
        <sequence type="described" ref="VSP_014694"/>
    </isoform>
</comment>
<comment type="domain">
    <text evidence="4">The PX domain mediates specific binding to phosphatidylinositol 3-phosphate (PtdIns(P3)).</text>
</comment>
<comment type="PTM">
    <text evidence="2">Ubiquitinated, leading to its proteasomal degradation. Deubiquitinated by USP10 (By similarity).</text>
</comment>
<comment type="disease">
    <text evidence="5">A chromosomal aberration involving SNX3 has been found in patients with syndromic microphthalmia. Translocation t(6;13)(q21;q12).</text>
</comment>
<comment type="similarity">
    <text evidence="18">Belongs to the sorting nexin family.</text>
</comment>
<evidence type="ECO:0000250" key="1"/>
<evidence type="ECO:0000250" key="2">
    <source>
        <dbReference type="UniProtKB" id="O70492"/>
    </source>
</evidence>
<evidence type="ECO:0000255" key="3">
    <source>
        <dbReference type="PROSITE-ProRule" id="PRU00147"/>
    </source>
</evidence>
<evidence type="ECO:0000269" key="4">
    <source>
    </source>
</evidence>
<evidence type="ECO:0000269" key="5">
    <source>
    </source>
</evidence>
<evidence type="ECO:0000269" key="6">
    <source>
    </source>
</evidence>
<evidence type="ECO:0000269" key="7">
    <source>
    </source>
</evidence>
<evidence type="ECO:0000269" key="8">
    <source>
    </source>
</evidence>
<evidence type="ECO:0000269" key="9">
    <source>
    </source>
</evidence>
<evidence type="ECO:0000269" key="10">
    <source>
    </source>
</evidence>
<evidence type="ECO:0000269" key="11">
    <source>
    </source>
</evidence>
<evidence type="ECO:0000269" key="12">
    <source>
    </source>
</evidence>
<evidence type="ECO:0000269" key="13">
    <source>
    </source>
</evidence>
<evidence type="ECO:0000269" key="14">
    <source>
    </source>
</evidence>
<evidence type="ECO:0000303" key="15">
    <source>
    </source>
</evidence>
<evidence type="ECO:0000303" key="16">
    <source>
    </source>
</evidence>
<evidence type="ECO:0000303" key="17">
    <source ref="3"/>
</evidence>
<evidence type="ECO:0000305" key="18"/>
<evidence type="ECO:0000305" key="19">
    <source>
    </source>
</evidence>
<evidence type="ECO:0000312" key="20">
    <source>
        <dbReference type="HGNC" id="HGNC:11174"/>
    </source>
</evidence>
<evidence type="ECO:0007744" key="21">
    <source>
    </source>
</evidence>
<evidence type="ECO:0007744" key="22">
    <source>
    </source>
</evidence>
<evidence type="ECO:0007744" key="23">
    <source>
    </source>
</evidence>
<evidence type="ECO:0007744" key="24">
    <source>
    </source>
</evidence>
<evidence type="ECO:0007744" key="25">
    <source>
    </source>
</evidence>
<evidence type="ECO:0007744" key="26">
    <source>
    </source>
</evidence>
<evidence type="ECO:0007744" key="27">
    <source>
    </source>
</evidence>
<evidence type="ECO:0007829" key="28">
    <source>
        <dbReference type="PDB" id="2YPS"/>
    </source>
</evidence>
<evidence type="ECO:0007829" key="29">
    <source>
        <dbReference type="PDB" id="5F0J"/>
    </source>
</evidence>
<dbReference type="EMBL" id="AF034546">
    <property type="protein sequence ID" value="AAC16040.1"/>
    <property type="molecule type" value="mRNA"/>
</dbReference>
<dbReference type="EMBL" id="AF062483">
    <property type="protein sequence ID" value="AAC16018.1"/>
    <property type="molecule type" value="mRNA"/>
</dbReference>
<dbReference type="EMBL" id="AB047360">
    <property type="protein sequence ID" value="BAB32649.1"/>
    <property type="molecule type" value="mRNA"/>
</dbReference>
<dbReference type="EMBL" id="AK289476">
    <property type="protein sequence ID" value="BAF82165.1"/>
    <property type="molecule type" value="mRNA"/>
</dbReference>
<dbReference type="EMBL" id="BT007114">
    <property type="protein sequence ID" value="AAP35778.1"/>
    <property type="molecule type" value="mRNA"/>
</dbReference>
<dbReference type="EMBL" id="CR456898">
    <property type="protein sequence ID" value="CAG33179.1"/>
    <property type="molecule type" value="mRNA"/>
</dbReference>
<dbReference type="EMBL" id="AL078596">
    <property type="status" value="NOT_ANNOTATED_CDS"/>
    <property type="molecule type" value="Genomic_DNA"/>
</dbReference>
<dbReference type="EMBL" id="Z98742">
    <property type="status" value="NOT_ANNOTATED_CDS"/>
    <property type="molecule type" value="Genomic_DNA"/>
</dbReference>
<dbReference type="EMBL" id="CH471051">
    <property type="protein sequence ID" value="EAW48378.1"/>
    <property type="molecule type" value="Genomic_DNA"/>
</dbReference>
<dbReference type="EMBL" id="CH471051">
    <property type="protein sequence ID" value="EAW48379.1"/>
    <property type="molecule type" value="Genomic_DNA"/>
</dbReference>
<dbReference type="EMBL" id="CH471051">
    <property type="protein sequence ID" value="EAW48381.1"/>
    <property type="molecule type" value="Genomic_DNA"/>
</dbReference>
<dbReference type="EMBL" id="CH471051">
    <property type="protein sequence ID" value="EAW48382.1"/>
    <property type="molecule type" value="Genomic_DNA"/>
</dbReference>
<dbReference type="EMBL" id="BC008444">
    <property type="protein sequence ID" value="AAH08444.1"/>
    <property type="molecule type" value="mRNA"/>
</dbReference>
<dbReference type="EMBL" id="BC014580">
    <property type="protein sequence ID" value="AAH14580.1"/>
    <property type="molecule type" value="mRNA"/>
</dbReference>
<dbReference type="EMBL" id="BC015179">
    <property type="protein sequence ID" value="AAH15179.1"/>
    <property type="molecule type" value="mRNA"/>
</dbReference>
<dbReference type="EMBL" id="BC016863">
    <property type="protein sequence ID" value="AAH16863.1"/>
    <property type="molecule type" value="mRNA"/>
</dbReference>
<dbReference type="CCDS" id="CCDS5064.1">
    <molecule id="O60493-1"/>
</dbReference>
<dbReference type="CCDS" id="CCDS5065.1">
    <molecule id="O60493-2"/>
</dbReference>
<dbReference type="CCDS" id="CCDS75501.1">
    <molecule id="O60493-4"/>
</dbReference>
<dbReference type="RefSeq" id="NP_001287858.1">
    <molecule id="O60493-4"/>
    <property type="nucleotide sequence ID" value="NM_001300929.2"/>
</dbReference>
<dbReference type="RefSeq" id="NP_003786.1">
    <molecule id="O60493-1"/>
    <property type="nucleotide sequence ID" value="NM_003795.6"/>
</dbReference>
<dbReference type="RefSeq" id="NP_690040.1">
    <molecule id="O60493-2"/>
    <property type="nucleotide sequence ID" value="NM_152827.4"/>
</dbReference>
<dbReference type="PDB" id="2MXC">
    <property type="method" value="NMR"/>
    <property type="chains" value="A=2-162"/>
</dbReference>
<dbReference type="PDB" id="2YPS">
    <property type="method" value="X-ray"/>
    <property type="resolution" value="2.60 A"/>
    <property type="chains" value="A/B/C/D=24-155"/>
</dbReference>
<dbReference type="PDB" id="5F0J">
    <property type="method" value="X-ray"/>
    <property type="resolution" value="2.70 A"/>
    <property type="chains" value="C=1-162"/>
</dbReference>
<dbReference type="PDB" id="5F0L">
    <property type="method" value="X-ray"/>
    <property type="resolution" value="3.20 A"/>
    <property type="chains" value="C=1-162"/>
</dbReference>
<dbReference type="PDB" id="5F0M">
    <property type="method" value="X-ray"/>
    <property type="resolution" value="3.10 A"/>
    <property type="chains" value="C=1-162"/>
</dbReference>
<dbReference type="PDB" id="5F0P">
    <property type="method" value="X-ray"/>
    <property type="resolution" value="2.78 A"/>
    <property type="chains" value="C=1-162"/>
</dbReference>
<dbReference type="PDB" id="7BLO">
    <property type="method" value="EM"/>
    <property type="resolution" value="9.50 A"/>
    <property type="chains" value="G/L=4-158"/>
</dbReference>
<dbReference type="PDBsum" id="2MXC"/>
<dbReference type="PDBsum" id="2YPS"/>
<dbReference type="PDBsum" id="5F0J"/>
<dbReference type="PDBsum" id="5F0L"/>
<dbReference type="PDBsum" id="5F0M"/>
<dbReference type="PDBsum" id="5F0P"/>
<dbReference type="PDBsum" id="7BLO"/>
<dbReference type="EMDB" id="EMD-12221"/>
<dbReference type="SMR" id="O60493"/>
<dbReference type="BioGRID" id="114263">
    <property type="interactions" value="218"/>
</dbReference>
<dbReference type="FunCoup" id="O60493">
    <property type="interactions" value="2699"/>
</dbReference>
<dbReference type="IntAct" id="O60493">
    <property type="interactions" value="101"/>
</dbReference>
<dbReference type="MINT" id="O60493"/>
<dbReference type="STRING" id="9606.ENSP00000230085"/>
<dbReference type="ChEMBL" id="CHEMBL5465275"/>
<dbReference type="DrugBank" id="DB04530">
    <property type="generic name" value="S,S-(2-Hydroxyethyl)Thiocysteine"/>
</dbReference>
<dbReference type="TCDB" id="3.A.34.1.1">
    <property type="family name" value="the sorting nexins of the escrt complexes (sn-escrt)"/>
</dbReference>
<dbReference type="TCDB" id="9.A.3.1.1">
    <property type="family name" value="the sorting nexin27 (snx27)-retromer assembly apparatus (retromeraa) family"/>
</dbReference>
<dbReference type="GlyGen" id="O60493">
    <property type="glycosylation" value="1 site, 1 O-linked glycan (1 site)"/>
</dbReference>
<dbReference type="iPTMnet" id="O60493"/>
<dbReference type="PhosphoSitePlus" id="O60493"/>
<dbReference type="BioMuta" id="SNX3"/>
<dbReference type="REPRODUCTION-2DPAGE" id="IPI00815770"/>
<dbReference type="jPOST" id="O60493"/>
<dbReference type="MassIVE" id="O60493"/>
<dbReference type="PaxDb" id="9606-ENSP00000230085"/>
<dbReference type="PeptideAtlas" id="O60493"/>
<dbReference type="ProteomicsDB" id="49428">
    <molecule id="O60493-1"/>
</dbReference>
<dbReference type="ProteomicsDB" id="49429">
    <molecule id="O60493-2"/>
</dbReference>
<dbReference type="ProteomicsDB" id="49430">
    <molecule id="O60493-3"/>
</dbReference>
<dbReference type="ProteomicsDB" id="49431">
    <molecule id="O60493-4"/>
</dbReference>
<dbReference type="Pumba" id="O60493"/>
<dbReference type="TopDownProteomics" id="O60493-1">
    <molecule id="O60493-1"/>
</dbReference>
<dbReference type="TopDownProteomics" id="O60493-2">
    <molecule id="O60493-2"/>
</dbReference>
<dbReference type="TopDownProteomics" id="O60493-4">
    <molecule id="O60493-4"/>
</dbReference>
<dbReference type="Antibodypedia" id="32208">
    <property type="antibodies" value="344 antibodies from 30 providers"/>
</dbReference>
<dbReference type="DNASU" id="8724"/>
<dbReference type="Ensembl" id="ENST00000230085.13">
    <molecule id="O60493-1"/>
    <property type="protein sequence ID" value="ENSP00000230085.8"/>
    <property type="gene ID" value="ENSG00000112335.15"/>
</dbReference>
<dbReference type="Ensembl" id="ENST00000349379.5">
    <molecule id="O60493-4"/>
    <property type="protein sequence ID" value="ENSP00000296991.7"/>
    <property type="gene ID" value="ENSG00000112335.15"/>
</dbReference>
<dbReference type="Ensembl" id="ENST00000368979.6">
    <molecule id="O60493-3"/>
    <property type="protein sequence ID" value="ENSP00000357975.2"/>
    <property type="gene ID" value="ENSG00000112335.15"/>
</dbReference>
<dbReference type="Ensembl" id="ENST00000426155.6">
    <molecule id="O60493-2"/>
    <property type="protein sequence ID" value="ENSP00000401779.2"/>
    <property type="gene ID" value="ENSG00000112335.15"/>
</dbReference>
<dbReference type="GeneID" id="8724"/>
<dbReference type="KEGG" id="hsa:8724"/>
<dbReference type="MANE-Select" id="ENST00000230085.13">
    <property type="protein sequence ID" value="ENSP00000230085.8"/>
    <property type="RefSeq nucleotide sequence ID" value="NM_003795.6"/>
    <property type="RefSeq protein sequence ID" value="NP_003786.1"/>
</dbReference>
<dbReference type="UCSC" id="uc003psh.4">
    <molecule id="O60493-1"/>
    <property type="organism name" value="human"/>
</dbReference>
<dbReference type="AGR" id="HGNC:11174"/>
<dbReference type="CTD" id="8724"/>
<dbReference type="DisGeNET" id="8724"/>
<dbReference type="GeneCards" id="SNX3"/>
<dbReference type="HGNC" id="HGNC:11174">
    <property type="gene designation" value="SNX3"/>
</dbReference>
<dbReference type="HPA" id="ENSG00000112335">
    <property type="expression patterns" value="Low tissue specificity"/>
</dbReference>
<dbReference type="MalaCards" id="SNX3"/>
<dbReference type="MIM" id="605930">
    <property type="type" value="gene"/>
</dbReference>
<dbReference type="neXtProt" id="NX_O60493"/>
<dbReference type="OpenTargets" id="ENSG00000112335"/>
<dbReference type="PharmGKB" id="PA36013"/>
<dbReference type="VEuPathDB" id="HostDB:ENSG00000112335"/>
<dbReference type="eggNOG" id="KOG2527">
    <property type="taxonomic scope" value="Eukaryota"/>
</dbReference>
<dbReference type="GeneTree" id="ENSGT00940000153609"/>
<dbReference type="HOGENOM" id="CLU_2183109_0_0_1"/>
<dbReference type="InParanoid" id="O60493"/>
<dbReference type="OMA" id="VGRQRYT"/>
<dbReference type="OrthoDB" id="5227681at2759"/>
<dbReference type="PAN-GO" id="O60493">
    <property type="GO annotations" value="5 GO annotations based on evolutionary models"/>
</dbReference>
<dbReference type="PhylomeDB" id="O60493"/>
<dbReference type="TreeFam" id="TF314980"/>
<dbReference type="PathwayCommons" id="O60493"/>
<dbReference type="Reactome" id="R-HSA-3238698">
    <property type="pathway name" value="WNT ligand biogenesis and trafficking"/>
</dbReference>
<dbReference type="Reactome" id="R-HSA-5689880">
    <property type="pathway name" value="Ub-specific processing proteases"/>
</dbReference>
<dbReference type="SignaLink" id="O60493"/>
<dbReference type="BioGRID-ORCS" id="8724">
    <property type="hits" value="13 hits in 1161 CRISPR screens"/>
</dbReference>
<dbReference type="CD-CODE" id="FB4E32DD">
    <property type="entry name" value="Presynaptic clusters and postsynaptic densities"/>
</dbReference>
<dbReference type="ChiTaRS" id="SNX3">
    <property type="organism name" value="human"/>
</dbReference>
<dbReference type="EvolutionaryTrace" id="O60493"/>
<dbReference type="GeneWiki" id="SNX3"/>
<dbReference type="GenomeRNAi" id="8724"/>
<dbReference type="Pharos" id="O60493">
    <property type="development level" value="Tbio"/>
</dbReference>
<dbReference type="PRO" id="PR:O60493"/>
<dbReference type="Proteomes" id="UP000005640">
    <property type="component" value="Chromosome 6"/>
</dbReference>
<dbReference type="RNAct" id="O60493">
    <property type="molecule type" value="protein"/>
</dbReference>
<dbReference type="Bgee" id="ENSG00000112335">
    <property type="expression patterns" value="Expressed in trabecular bone tissue and 210 other cell types or tissues"/>
</dbReference>
<dbReference type="GO" id="GO:0030136">
    <property type="term" value="C:clathrin-coated vesicle"/>
    <property type="evidence" value="ECO:0000314"/>
    <property type="project" value="UniProtKB"/>
</dbReference>
<dbReference type="GO" id="GO:0005737">
    <property type="term" value="C:cytoplasm"/>
    <property type="evidence" value="ECO:0000314"/>
    <property type="project" value="HGNC-UCL"/>
</dbReference>
<dbReference type="GO" id="GO:0005829">
    <property type="term" value="C:cytosol"/>
    <property type="evidence" value="ECO:0000314"/>
    <property type="project" value="UniProtKB"/>
</dbReference>
<dbReference type="GO" id="GO:0005769">
    <property type="term" value="C:early endosome"/>
    <property type="evidence" value="ECO:0000314"/>
    <property type="project" value="UniProtKB"/>
</dbReference>
<dbReference type="GO" id="GO:0031901">
    <property type="term" value="C:early endosome membrane"/>
    <property type="evidence" value="ECO:0000314"/>
    <property type="project" value="UniProtKB"/>
</dbReference>
<dbReference type="GO" id="GO:0032009">
    <property type="term" value="C:early phagosome"/>
    <property type="evidence" value="ECO:0000314"/>
    <property type="project" value="UniProtKB"/>
</dbReference>
<dbReference type="GO" id="GO:0010008">
    <property type="term" value="C:endosome membrane"/>
    <property type="evidence" value="ECO:0000314"/>
    <property type="project" value="UniProtKB"/>
</dbReference>
<dbReference type="GO" id="GO:0070062">
    <property type="term" value="C:extracellular exosome"/>
    <property type="evidence" value="ECO:0007005"/>
    <property type="project" value="UniProtKB"/>
</dbReference>
<dbReference type="GO" id="GO:0030904">
    <property type="term" value="C:retromer complex"/>
    <property type="evidence" value="ECO:0000318"/>
    <property type="project" value="GO_Central"/>
</dbReference>
<dbReference type="GO" id="GO:0080025">
    <property type="term" value="F:phosphatidylinositol-3,5-bisphosphate binding"/>
    <property type="evidence" value="ECO:0000250"/>
    <property type="project" value="UniProtKB"/>
</dbReference>
<dbReference type="GO" id="GO:0032266">
    <property type="term" value="F:phosphatidylinositol-3-phosphate binding"/>
    <property type="evidence" value="ECO:0000314"/>
    <property type="project" value="UniProtKB"/>
</dbReference>
<dbReference type="GO" id="GO:0070273">
    <property type="term" value="F:phosphatidylinositol-4-phosphate binding"/>
    <property type="evidence" value="ECO:0000250"/>
    <property type="project" value="UniProtKB"/>
</dbReference>
<dbReference type="GO" id="GO:0010314">
    <property type="term" value="F:phosphatidylinositol-5-phosphate binding"/>
    <property type="evidence" value="ECO:0000250"/>
    <property type="project" value="UniProtKB"/>
</dbReference>
<dbReference type="GO" id="GO:0019903">
    <property type="term" value="F:protein phosphatase binding"/>
    <property type="evidence" value="ECO:0000353"/>
    <property type="project" value="UniProtKB"/>
</dbReference>
<dbReference type="GO" id="GO:1905394">
    <property type="term" value="F:retromer complex binding"/>
    <property type="evidence" value="ECO:0000314"/>
    <property type="project" value="UniProtKB"/>
</dbReference>
<dbReference type="GO" id="GO:0032456">
    <property type="term" value="P:endocytic recycling"/>
    <property type="evidence" value="ECO:0000318"/>
    <property type="project" value="GO_Central"/>
</dbReference>
<dbReference type="GO" id="GO:0046597">
    <property type="term" value="P:host-mediated suppression of symbiont invasion"/>
    <property type="evidence" value="ECO:0000314"/>
    <property type="project" value="UniProtKB"/>
</dbReference>
<dbReference type="GO" id="GO:0070676">
    <property type="term" value="P:intralumenal vesicle formation"/>
    <property type="evidence" value="ECO:0000315"/>
    <property type="project" value="UniProtKB"/>
</dbReference>
<dbReference type="GO" id="GO:0034499">
    <property type="term" value="P:late endosome to Golgi transport"/>
    <property type="evidence" value="ECO:0000318"/>
    <property type="project" value="GO_Central"/>
</dbReference>
<dbReference type="GO" id="GO:0010324">
    <property type="term" value="P:membrane invagination"/>
    <property type="evidence" value="ECO:0000314"/>
    <property type="project" value="UniProtKB"/>
</dbReference>
<dbReference type="GO" id="GO:2000642">
    <property type="term" value="P:negative regulation of early endosome to late endosome transport"/>
    <property type="evidence" value="ECO:0000314"/>
    <property type="project" value="UniProtKB"/>
</dbReference>
<dbReference type="GO" id="GO:0050765">
    <property type="term" value="P:negative regulation of phagocytosis"/>
    <property type="evidence" value="ECO:0000315"/>
    <property type="project" value="UniProtKB"/>
</dbReference>
<dbReference type="GO" id="GO:0042177">
    <property type="term" value="P:negative regulation of protein catabolic process"/>
    <property type="evidence" value="ECO:0000314"/>
    <property type="project" value="UniProtKB"/>
</dbReference>
<dbReference type="GO" id="GO:0051224">
    <property type="term" value="P:negative regulation of protein transport"/>
    <property type="evidence" value="ECO:0000314"/>
    <property type="project" value="UniProtKB"/>
</dbReference>
<dbReference type="GO" id="GO:0010976">
    <property type="term" value="P:positive regulation of neuron projection development"/>
    <property type="evidence" value="ECO:0000250"/>
    <property type="project" value="UniProtKB"/>
</dbReference>
<dbReference type="GO" id="GO:0022615">
    <property type="term" value="P:protein to membrane docking"/>
    <property type="evidence" value="ECO:0000314"/>
    <property type="project" value="UniProtKB"/>
</dbReference>
<dbReference type="GO" id="GO:0015031">
    <property type="term" value="P:protein transport"/>
    <property type="evidence" value="ECO:0007669"/>
    <property type="project" value="UniProtKB-KW"/>
</dbReference>
<dbReference type="GO" id="GO:0030111">
    <property type="term" value="P:regulation of Wnt signaling pathway"/>
    <property type="evidence" value="ECO:0000315"/>
    <property type="project" value="UniProtKB"/>
</dbReference>
<dbReference type="GO" id="GO:0009617">
    <property type="term" value="P:response to bacterium"/>
    <property type="evidence" value="ECO:0000314"/>
    <property type="project" value="UniProtKB"/>
</dbReference>
<dbReference type="CDD" id="cd07293">
    <property type="entry name" value="PX_SNX3"/>
    <property type="match status" value="1"/>
</dbReference>
<dbReference type="FunFam" id="3.30.1520.10:FF:000002">
    <property type="entry name" value="Sorting nexin 12"/>
    <property type="match status" value="1"/>
</dbReference>
<dbReference type="Gene3D" id="3.30.1520.10">
    <property type="entry name" value="Phox-like domain"/>
    <property type="match status" value="1"/>
</dbReference>
<dbReference type="InterPro" id="IPR001683">
    <property type="entry name" value="PX_dom"/>
</dbReference>
<dbReference type="InterPro" id="IPR036871">
    <property type="entry name" value="PX_dom_sf"/>
</dbReference>
<dbReference type="InterPro" id="IPR042137">
    <property type="entry name" value="PX_SNX3_Vert"/>
</dbReference>
<dbReference type="InterPro" id="IPR051074">
    <property type="entry name" value="Sorting_Nexin"/>
</dbReference>
<dbReference type="PANTHER" id="PTHR45963">
    <property type="entry name" value="RE52028P"/>
    <property type="match status" value="1"/>
</dbReference>
<dbReference type="PANTHER" id="PTHR45963:SF1">
    <property type="entry name" value="SORTING NEXIN-3"/>
    <property type="match status" value="1"/>
</dbReference>
<dbReference type="Pfam" id="PF00787">
    <property type="entry name" value="PX"/>
    <property type="match status" value="1"/>
</dbReference>
<dbReference type="SMART" id="SM00312">
    <property type="entry name" value="PX"/>
    <property type="match status" value="1"/>
</dbReference>
<dbReference type="SUPFAM" id="SSF64268">
    <property type="entry name" value="PX domain"/>
    <property type="match status" value="1"/>
</dbReference>
<dbReference type="PROSITE" id="PS50195">
    <property type="entry name" value="PX"/>
    <property type="match status" value="1"/>
</dbReference>
<protein>
    <recommendedName>
        <fullName>Sorting nexin-3</fullName>
    </recommendedName>
    <alternativeName>
        <fullName>Protein SDP3</fullName>
    </alternativeName>
</protein>
<proteinExistence type="evidence at protein level"/>
<keyword id="KW-0002">3D-structure</keyword>
<keyword id="KW-0007">Acetylation</keyword>
<keyword id="KW-0025">Alternative splicing</keyword>
<keyword id="KW-0160">Chromosomal rearrangement</keyword>
<keyword id="KW-0968">Cytoplasmic vesicle</keyword>
<keyword id="KW-0903">Direct protein sequencing</keyword>
<keyword id="KW-0967">Endosome</keyword>
<keyword id="KW-1017">Isopeptide bond</keyword>
<keyword id="KW-0446">Lipid-binding</keyword>
<keyword id="KW-0488">Methylation</keyword>
<keyword id="KW-1013">Microphthalmia</keyword>
<keyword id="KW-0597">Phosphoprotein</keyword>
<keyword id="KW-0653">Protein transport</keyword>
<keyword id="KW-1267">Proteomics identification</keyword>
<keyword id="KW-1185">Reference proteome</keyword>
<keyword id="KW-0813">Transport</keyword>
<keyword id="KW-0832">Ubl conjugation</keyword>
<feature type="initiator methionine" description="Removed" evidence="6 22 26">
    <location>
        <position position="1"/>
    </location>
</feature>
<feature type="chain" id="PRO_0000213840" description="Sorting nexin-3">
    <location>
        <begin position="2"/>
        <end position="162"/>
    </location>
</feature>
<feature type="domain" description="PX" evidence="3">
    <location>
        <begin position="27"/>
        <end position="151"/>
    </location>
</feature>
<feature type="region of interest" description="Binds predominantly to PtdIns(P5) and weaker to PtdIns(P3) abd PtdIns(P4); involved in neurite outgrowth regulation" evidence="2">
    <location>
        <begin position="147"/>
        <end position="162"/>
    </location>
</feature>
<feature type="binding site" evidence="1">
    <location>
        <position position="70"/>
    </location>
    <ligand>
        <name>a 1,2-diacyl-sn-glycero-3-phospho-(1D-myo-inositol-3-phosphate)</name>
        <dbReference type="ChEBI" id="CHEBI:58088"/>
    </ligand>
</feature>
<feature type="binding site" evidence="1">
    <location>
        <position position="72"/>
    </location>
    <ligand>
        <name>a 1,2-diacyl-sn-glycero-3-phospho-(1D-myo-inositol-3-phosphate)</name>
        <dbReference type="ChEBI" id="CHEBI:58088"/>
    </ligand>
</feature>
<feature type="binding site" evidence="1">
    <location>
        <position position="95"/>
    </location>
    <ligand>
        <name>a 1,2-diacyl-sn-glycero-3-phospho-(1D-myo-inositol-3-phosphate)</name>
        <dbReference type="ChEBI" id="CHEBI:58088"/>
    </ligand>
</feature>
<feature type="binding site" evidence="1">
    <location>
        <position position="118"/>
    </location>
    <ligand>
        <name>a 1,2-diacyl-sn-glycero-3-phospho-(1D-myo-inositol-3-phosphate)</name>
        <dbReference type="ChEBI" id="CHEBI:58088"/>
    </ligand>
</feature>
<feature type="modified residue" description="N-acetylalanine" evidence="6 22 26">
    <location>
        <position position="2"/>
    </location>
</feature>
<feature type="modified residue" description="Omega-N-methylarginine" evidence="25">
    <location>
        <position position="43"/>
    </location>
</feature>
<feature type="modified residue" description="Phosphoserine" evidence="21 23 24">
    <location>
        <position position="72"/>
    </location>
</feature>
<feature type="cross-link" description="Glycyl lysine isopeptide (Lys-Gly) (interchain with G-Cter in SUMO2)" evidence="27">
    <location>
        <position position="95"/>
    </location>
</feature>
<feature type="splice variant" id="VSP_014694" description="In isoform 4." evidence="18">
    <location>
        <begin position="33"/>
        <end position="54"/>
    </location>
</feature>
<feature type="splice variant" id="VSP_006190" description="In isoform 2." evidence="17">
    <location>
        <begin position="55"/>
        <end position="86"/>
    </location>
</feature>
<feature type="splice variant" id="VSP_012928" description="In isoform 3." evidence="15">
    <original>VVVPPLPGKAFLRQLPFRGDDGIFDDNFIEERKQGLEQFINKVAGHPLAQNERCLHMFLQDEIIDKSYTPSKIRHA</original>
    <variation>PCLRMTSEARSHGRTWCAQNDEKLFCD</variation>
    <location>
        <begin position="87"/>
        <end position="162"/>
    </location>
</feature>
<feature type="mutagenesis site" description="Loss of VPS35 binding." evidence="14">
    <original>RR</original>
    <variation>AA</variation>
    <location>
        <begin position="9"/>
        <end position="10"/>
    </location>
</feature>
<feature type="mutagenesis site" description="Loss of VPS35 binding." evidence="14">
    <location>
        <begin position="22"/>
        <end position="28"/>
    </location>
</feature>
<feature type="mutagenesis site" description="Loss of VPS35 binding." evidence="14">
    <original>Y</original>
    <variation>A</variation>
    <location>
        <position position="22"/>
    </location>
</feature>
<feature type="mutagenesis site" description="Abolishes interaction with retromer cargo-selective subcomplex VPS26A:VPS29:VPS35; when associated with A-30 and A-32." evidence="12">
    <original>F</original>
    <variation>A</variation>
    <location>
        <position position="28"/>
    </location>
</feature>
<feature type="mutagenesis site" description="Loss of VPS35 binding." evidence="14">
    <original>EID</original>
    <variation>TIR</variation>
    <location>
        <begin position="30"/>
        <end position="32"/>
    </location>
</feature>
<feature type="mutagenesis site" description="Abolishes interaction with retromer cargo-selective subcomplex VPS26A:VPS29:VPS35; when associated with A-28 and A-32." evidence="12">
    <original>E</original>
    <variation>A</variation>
    <location>
        <position position="30"/>
    </location>
</feature>
<feature type="mutagenesis site" description="Abolishes interaction with retromer cargo-selective subcomplex VPS26A:VPS29:VPS35; when associated with A-28 and A-30." evidence="12">
    <original>D</original>
    <variation>A</variation>
    <location>
        <position position="32"/>
    </location>
</feature>
<feature type="mutagenesis site" description="Loss of VPS35 binding." evidence="14">
    <original>E</original>
    <variation>K</variation>
    <location>
        <position position="50"/>
    </location>
</feature>
<feature type="mutagenesis site" description="Abolishes binding to phosphatidylinositol 3-phosphate." evidence="4">
    <original>RRY</original>
    <variation>AAA</variation>
    <location>
        <begin position="69"/>
        <end position="71"/>
    </location>
</feature>
<feature type="mutagenesis site" description="Abolishes binding to phosphatidylinositol 3-phosphate." evidence="4">
    <original>Y</original>
    <variation>A</variation>
    <location>
        <position position="71"/>
    </location>
</feature>
<feature type="mutagenesis site" description="Increases VPS35 binding." evidence="14">
    <original>E</original>
    <variation>A</variation>
    <location>
        <position position="75"/>
    </location>
</feature>
<feature type="mutagenesis site" description="Decreases VPS35 binding." evidence="14">
    <original>ESK</original>
    <variation>NAG</variation>
    <location>
        <begin position="84"/>
        <end position="86"/>
    </location>
</feature>
<feature type="mutagenesis site" description="Increases VPS35 binding." evidence="14">
    <location>
        <begin position="99"/>
        <end position="110"/>
    </location>
</feature>
<feature type="mutagenesis site" description="Decreases VPS35 binding." evidence="14">
    <original>Y</original>
    <variation>A</variation>
    <location>
        <position position="154"/>
    </location>
</feature>
<feature type="mutagenesis site" description="Decreases VPS35 binding." evidence="14">
    <original>P</original>
    <variation>A</variation>
    <location>
        <position position="156"/>
    </location>
</feature>
<feature type="mutagenesis site" description="Loss of VPS35 binding." evidence="14">
    <original>R</original>
    <variation>A</variation>
    <location>
        <position position="160"/>
    </location>
</feature>
<feature type="sequence conflict" description="In Ref. 2; AAC16018." evidence="18" ref="2">
    <original>QL</original>
    <variation>HF</variation>
    <location>
        <begin position="100"/>
        <end position="101"/>
    </location>
</feature>
<feature type="sequence conflict" description="In Ref. 4; BAF82165." evidence="18" ref="4">
    <original>D</original>
    <variation>V</variation>
    <location>
        <position position="151"/>
    </location>
</feature>
<feature type="helix" evidence="29">
    <location>
        <begin position="18"/>
        <end position="22"/>
    </location>
</feature>
<feature type="strand" evidence="28">
    <location>
        <begin position="29"/>
        <end position="34"/>
    </location>
</feature>
<feature type="helix" evidence="28">
    <location>
        <begin position="44"/>
        <end position="46"/>
    </location>
</feature>
<feature type="strand" evidence="28">
    <location>
        <begin position="49"/>
        <end position="55"/>
    </location>
</feature>
<feature type="strand" evidence="28">
    <location>
        <begin position="63"/>
        <end position="69"/>
    </location>
</feature>
<feature type="helix" evidence="28">
    <location>
        <begin position="71"/>
        <end position="84"/>
    </location>
</feature>
<feature type="helix" evidence="29">
    <location>
        <begin position="97"/>
        <end position="100"/>
    </location>
</feature>
<feature type="strand" evidence="29">
    <location>
        <begin position="101"/>
        <end position="103"/>
    </location>
</feature>
<feature type="helix" evidence="29">
    <location>
        <begin position="108"/>
        <end position="110"/>
    </location>
</feature>
<feature type="helix" evidence="28">
    <location>
        <begin position="114"/>
        <end position="131"/>
    </location>
</feature>
<feature type="helix" evidence="28">
    <location>
        <begin position="133"/>
        <end position="136"/>
    </location>
</feature>
<feature type="helix" evidence="28">
    <location>
        <begin position="139"/>
        <end position="146"/>
    </location>
</feature>
<feature type="strand" evidence="29">
    <location>
        <begin position="147"/>
        <end position="149"/>
    </location>
</feature>
<sequence length="162" mass="18762">MAETVADTRRLITKPQNLNDAYGPPSNFLEIDVSNPQTVGVGRGRFTTYEIRVKTNLPIFKLKESTVRRRYSDFEWLRSELERESKVVVPPLPGKAFLRQLPFRGDDGIFDDNFIEERKQGLEQFINKVAGHPLAQNERCLHMFLQDEIIDKSYTPSKIRHA</sequence>
<reference key="1">
    <citation type="journal article" date="1998" name="Mol. Cell. Biol.">
        <title>Identification of a family of sorting nexin molecules and characterization of their association with receptors.</title>
        <authorList>
            <person name="Haft C.R."/>
            <person name="de la Luz Sierra M."/>
            <person name="Barr V.A."/>
            <person name="Haft D.H."/>
            <person name="Taylor S.I."/>
        </authorList>
    </citation>
    <scope>NUCLEOTIDE SEQUENCE [MRNA] (ISOFORM 1)</scope>
</reference>
<reference key="2">
    <citation type="journal article" date="2001" name="Nat. Cell Biol.">
        <title>SNX3 regulates endosomal function through its PX-domain-mediated interaction with PtdIns(3)P.</title>
        <authorList>
            <person name="Xu Y."/>
            <person name="Hortsman H."/>
            <person name="Seet L."/>
            <person name="Wong S.H."/>
            <person name="Hong W."/>
        </authorList>
    </citation>
    <scope>NUCLEOTIDE SEQUENCE [MRNA] (ISOFORM 1)</scope>
    <scope>FUNCTION</scope>
    <scope>SUBCELLULAR LOCATION</scope>
    <scope>PHOSPHOINOSITIDE-BINDING</scope>
    <scope>DOMAIN PX</scope>
    <scope>MUTAGENESIS OF 69-ARG--TYR-71 AND TYR-71</scope>
</reference>
<reference key="3">
    <citation type="submission" date="2000-08" db="EMBL/GenBank/DDBJ databases">
        <title>Homo sapiens sorting nexin 3A (SNX 3A) mRNA.</title>
        <authorList>
            <person name="Hayama A."/>
            <person name="Uchida S."/>
            <person name="Sasaki S."/>
            <person name="Marumo F."/>
        </authorList>
    </citation>
    <scope>NUCLEOTIDE SEQUENCE [MRNA] (ISOFORM 2)</scope>
</reference>
<reference key="4">
    <citation type="journal article" date="2004" name="Nat. Genet.">
        <title>Complete sequencing and characterization of 21,243 full-length human cDNAs.</title>
        <authorList>
            <person name="Ota T."/>
            <person name="Suzuki Y."/>
            <person name="Nishikawa T."/>
            <person name="Otsuki T."/>
            <person name="Sugiyama T."/>
            <person name="Irie R."/>
            <person name="Wakamatsu A."/>
            <person name="Hayashi K."/>
            <person name="Sato H."/>
            <person name="Nagai K."/>
            <person name="Kimura K."/>
            <person name="Makita H."/>
            <person name="Sekine M."/>
            <person name="Obayashi M."/>
            <person name="Nishi T."/>
            <person name="Shibahara T."/>
            <person name="Tanaka T."/>
            <person name="Ishii S."/>
            <person name="Yamamoto J."/>
            <person name="Saito K."/>
            <person name="Kawai Y."/>
            <person name="Isono Y."/>
            <person name="Nakamura Y."/>
            <person name="Nagahari K."/>
            <person name="Murakami K."/>
            <person name="Yasuda T."/>
            <person name="Iwayanagi T."/>
            <person name="Wagatsuma M."/>
            <person name="Shiratori A."/>
            <person name="Sudo H."/>
            <person name="Hosoiri T."/>
            <person name="Kaku Y."/>
            <person name="Kodaira H."/>
            <person name="Kondo H."/>
            <person name="Sugawara M."/>
            <person name="Takahashi M."/>
            <person name="Kanda K."/>
            <person name="Yokoi T."/>
            <person name="Furuya T."/>
            <person name="Kikkawa E."/>
            <person name="Omura Y."/>
            <person name="Abe K."/>
            <person name="Kamihara K."/>
            <person name="Katsuta N."/>
            <person name="Sato K."/>
            <person name="Tanikawa M."/>
            <person name="Yamazaki M."/>
            <person name="Ninomiya K."/>
            <person name="Ishibashi T."/>
            <person name="Yamashita H."/>
            <person name="Murakawa K."/>
            <person name="Fujimori K."/>
            <person name="Tanai H."/>
            <person name="Kimata M."/>
            <person name="Watanabe M."/>
            <person name="Hiraoka S."/>
            <person name="Chiba Y."/>
            <person name="Ishida S."/>
            <person name="Ono Y."/>
            <person name="Takiguchi S."/>
            <person name="Watanabe S."/>
            <person name="Yosida M."/>
            <person name="Hotuta T."/>
            <person name="Kusano J."/>
            <person name="Kanehori K."/>
            <person name="Takahashi-Fujii A."/>
            <person name="Hara H."/>
            <person name="Tanase T.-O."/>
            <person name="Nomura Y."/>
            <person name="Togiya S."/>
            <person name="Komai F."/>
            <person name="Hara R."/>
            <person name="Takeuchi K."/>
            <person name="Arita M."/>
            <person name="Imose N."/>
            <person name="Musashino K."/>
            <person name="Yuuki H."/>
            <person name="Oshima A."/>
            <person name="Sasaki N."/>
            <person name="Aotsuka S."/>
            <person name="Yoshikawa Y."/>
            <person name="Matsunawa H."/>
            <person name="Ichihara T."/>
            <person name="Shiohata N."/>
            <person name="Sano S."/>
            <person name="Moriya S."/>
            <person name="Momiyama H."/>
            <person name="Satoh N."/>
            <person name="Takami S."/>
            <person name="Terashima Y."/>
            <person name="Suzuki O."/>
            <person name="Nakagawa S."/>
            <person name="Senoh A."/>
            <person name="Mizoguchi H."/>
            <person name="Goto Y."/>
            <person name="Shimizu F."/>
            <person name="Wakebe H."/>
            <person name="Hishigaki H."/>
            <person name="Watanabe T."/>
            <person name="Sugiyama A."/>
            <person name="Takemoto M."/>
            <person name="Kawakami B."/>
            <person name="Yamazaki M."/>
            <person name="Watanabe K."/>
            <person name="Kumagai A."/>
            <person name="Itakura S."/>
            <person name="Fukuzumi Y."/>
            <person name="Fujimori Y."/>
            <person name="Komiyama M."/>
            <person name="Tashiro H."/>
            <person name="Tanigami A."/>
            <person name="Fujiwara T."/>
            <person name="Ono T."/>
            <person name="Yamada K."/>
            <person name="Fujii Y."/>
            <person name="Ozaki K."/>
            <person name="Hirao M."/>
            <person name="Ohmori Y."/>
            <person name="Kawabata A."/>
            <person name="Hikiji T."/>
            <person name="Kobatake N."/>
            <person name="Inagaki H."/>
            <person name="Ikema Y."/>
            <person name="Okamoto S."/>
            <person name="Okitani R."/>
            <person name="Kawakami T."/>
            <person name="Noguchi S."/>
            <person name="Itoh T."/>
            <person name="Shigeta K."/>
            <person name="Senba T."/>
            <person name="Matsumura K."/>
            <person name="Nakajima Y."/>
            <person name="Mizuno T."/>
            <person name="Morinaga M."/>
            <person name="Sasaki M."/>
            <person name="Togashi T."/>
            <person name="Oyama M."/>
            <person name="Hata H."/>
            <person name="Watanabe M."/>
            <person name="Komatsu T."/>
            <person name="Mizushima-Sugano J."/>
            <person name="Satoh T."/>
            <person name="Shirai Y."/>
            <person name="Takahashi Y."/>
            <person name="Nakagawa K."/>
            <person name="Okumura K."/>
            <person name="Nagase T."/>
            <person name="Nomura N."/>
            <person name="Kikuchi H."/>
            <person name="Masuho Y."/>
            <person name="Yamashita R."/>
            <person name="Nakai K."/>
            <person name="Yada T."/>
            <person name="Nakamura Y."/>
            <person name="Ohara O."/>
            <person name="Isogai T."/>
            <person name="Sugano S."/>
        </authorList>
    </citation>
    <scope>NUCLEOTIDE SEQUENCE [LARGE SCALE MRNA] (ISOFORM 1)</scope>
    <source>
        <tissue>Cerebellum</tissue>
    </source>
</reference>
<reference key="5">
    <citation type="submission" date="2003-05" db="EMBL/GenBank/DDBJ databases">
        <title>Cloning of human full-length CDSs in BD Creator(TM) system donor vector.</title>
        <authorList>
            <person name="Kalnine N."/>
            <person name="Chen X."/>
            <person name="Rolfs A."/>
            <person name="Halleck A."/>
            <person name="Hines L."/>
            <person name="Eisenstein S."/>
            <person name="Koundinya M."/>
            <person name="Raphael J."/>
            <person name="Moreira D."/>
            <person name="Kelley T."/>
            <person name="LaBaer J."/>
            <person name="Lin Y."/>
            <person name="Phelan M."/>
            <person name="Farmer A."/>
        </authorList>
    </citation>
    <scope>NUCLEOTIDE SEQUENCE [LARGE SCALE MRNA] (ISOFORM 1)</scope>
</reference>
<reference key="6">
    <citation type="submission" date="2004-06" db="EMBL/GenBank/DDBJ databases">
        <title>Cloning of human full open reading frames in Gateway(TM) system entry vector (pDONR201).</title>
        <authorList>
            <person name="Ebert L."/>
            <person name="Schick M."/>
            <person name="Neubert P."/>
            <person name="Schatten R."/>
            <person name="Henze S."/>
            <person name="Korn B."/>
        </authorList>
    </citation>
    <scope>NUCLEOTIDE SEQUENCE [LARGE SCALE MRNA] (ISOFORM 1)</scope>
</reference>
<reference key="7">
    <citation type="journal article" date="2003" name="Nature">
        <title>The DNA sequence and analysis of human chromosome 6.</title>
        <authorList>
            <person name="Mungall A.J."/>
            <person name="Palmer S.A."/>
            <person name="Sims S.K."/>
            <person name="Edwards C.A."/>
            <person name="Ashurst J.L."/>
            <person name="Wilming L."/>
            <person name="Jones M.C."/>
            <person name="Horton R."/>
            <person name="Hunt S.E."/>
            <person name="Scott C.E."/>
            <person name="Gilbert J.G.R."/>
            <person name="Clamp M.E."/>
            <person name="Bethel G."/>
            <person name="Milne S."/>
            <person name="Ainscough R."/>
            <person name="Almeida J.P."/>
            <person name="Ambrose K.D."/>
            <person name="Andrews T.D."/>
            <person name="Ashwell R.I.S."/>
            <person name="Babbage A.K."/>
            <person name="Bagguley C.L."/>
            <person name="Bailey J."/>
            <person name="Banerjee R."/>
            <person name="Barker D.J."/>
            <person name="Barlow K.F."/>
            <person name="Bates K."/>
            <person name="Beare D.M."/>
            <person name="Beasley H."/>
            <person name="Beasley O."/>
            <person name="Bird C.P."/>
            <person name="Blakey S.E."/>
            <person name="Bray-Allen S."/>
            <person name="Brook J."/>
            <person name="Brown A.J."/>
            <person name="Brown J.Y."/>
            <person name="Burford D.C."/>
            <person name="Burrill W."/>
            <person name="Burton J."/>
            <person name="Carder C."/>
            <person name="Carter N.P."/>
            <person name="Chapman J.C."/>
            <person name="Clark S.Y."/>
            <person name="Clark G."/>
            <person name="Clee C.M."/>
            <person name="Clegg S."/>
            <person name="Cobley V."/>
            <person name="Collier R.E."/>
            <person name="Collins J.E."/>
            <person name="Colman L.K."/>
            <person name="Corby N.R."/>
            <person name="Coville G.J."/>
            <person name="Culley K.M."/>
            <person name="Dhami P."/>
            <person name="Davies J."/>
            <person name="Dunn M."/>
            <person name="Earthrowl M.E."/>
            <person name="Ellington A.E."/>
            <person name="Evans K.A."/>
            <person name="Faulkner L."/>
            <person name="Francis M.D."/>
            <person name="Frankish A."/>
            <person name="Frankland J."/>
            <person name="French L."/>
            <person name="Garner P."/>
            <person name="Garnett J."/>
            <person name="Ghori M.J."/>
            <person name="Gilby L.M."/>
            <person name="Gillson C.J."/>
            <person name="Glithero R.J."/>
            <person name="Grafham D.V."/>
            <person name="Grant M."/>
            <person name="Gribble S."/>
            <person name="Griffiths C."/>
            <person name="Griffiths M.N.D."/>
            <person name="Hall R."/>
            <person name="Halls K.S."/>
            <person name="Hammond S."/>
            <person name="Harley J.L."/>
            <person name="Hart E.A."/>
            <person name="Heath P.D."/>
            <person name="Heathcott R."/>
            <person name="Holmes S.J."/>
            <person name="Howden P.J."/>
            <person name="Howe K.L."/>
            <person name="Howell G.R."/>
            <person name="Huckle E."/>
            <person name="Humphray S.J."/>
            <person name="Humphries M.D."/>
            <person name="Hunt A.R."/>
            <person name="Johnson C.M."/>
            <person name="Joy A.A."/>
            <person name="Kay M."/>
            <person name="Keenan S.J."/>
            <person name="Kimberley A.M."/>
            <person name="King A."/>
            <person name="Laird G.K."/>
            <person name="Langford C."/>
            <person name="Lawlor S."/>
            <person name="Leongamornlert D.A."/>
            <person name="Leversha M."/>
            <person name="Lloyd C.R."/>
            <person name="Lloyd D.M."/>
            <person name="Loveland J.E."/>
            <person name="Lovell J."/>
            <person name="Martin S."/>
            <person name="Mashreghi-Mohammadi M."/>
            <person name="Maslen G.L."/>
            <person name="Matthews L."/>
            <person name="McCann O.T."/>
            <person name="McLaren S.J."/>
            <person name="McLay K."/>
            <person name="McMurray A."/>
            <person name="Moore M.J.F."/>
            <person name="Mullikin J.C."/>
            <person name="Niblett D."/>
            <person name="Nickerson T."/>
            <person name="Novik K.L."/>
            <person name="Oliver K."/>
            <person name="Overton-Larty E.K."/>
            <person name="Parker A."/>
            <person name="Patel R."/>
            <person name="Pearce A.V."/>
            <person name="Peck A.I."/>
            <person name="Phillimore B.J.C.T."/>
            <person name="Phillips S."/>
            <person name="Plumb R.W."/>
            <person name="Porter K.M."/>
            <person name="Ramsey Y."/>
            <person name="Ranby S.A."/>
            <person name="Rice C.M."/>
            <person name="Ross M.T."/>
            <person name="Searle S.M."/>
            <person name="Sehra H.K."/>
            <person name="Sheridan E."/>
            <person name="Skuce C.D."/>
            <person name="Smith S."/>
            <person name="Smith M."/>
            <person name="Spraggon L."/>
            <person name="Squares S.L."/>
            <person name="Steward C.A."/>
            <person name="Sycamore N."/>
            <person name="Tamlyn-Hall G."/>
            <person name="Tester J."/>
            <person name="Theaker A.J."/>
            <person name="Thomas D.W."/>
            <person name="Thorpe A."/>
            <person name="Tracey A."/>
            <person name="Tromans A."/>
            <person name="Tubby B."/>
            <person name="Wall M."/>
            <person name="Wallis J.M."/>
            <person name="West A.P."/>
            <person name="White S.S."/>
            <person name="Whitehead S.L."/>
            <person name="Whittaker H."/>
            <person name="Wild A."/>
            <person name="Willey D.J."/>
            <person name="Wilmer T.E."/>
            <person name="Wood J.M."/>
            <person name="Wray P.W."/>
            <person name="Wyatt J.C."/>
            <person name="Young L."/>
            <person name="Younger R.M."/>
            <person name="Bentley D.R."/>
            <person name="Coulson A."/>
            <person name="Durbin R.M."/>
            <person name="Hubbard T."/>
            <person name="Sulston J.E."/>
            <person name="Dunham I."/>
            <person name="Rogers J."/>
            <person name="Beck S."/>
        </authorList>
    </citation>
    <scope>NUCLEOTIDE SEQUENCE [LARGE SCALE GENOMIC DNA]</scope>
</reference>
<reference key="8">
    <citation type="submission" date="2005-09" db="EMBL/GenBank/DDBJ databases">
        <authorList>
            <person name="Mural R.J."/>
            <person name="Istrail S."/>
            <person name="Sutton G.G."/>
            <person name="Florea L."/>
            <person name="Halpern A.L."/>
            <person name="Mobarry C.M."/>
            <person name="Lippert R."/>
            <person name="Walenz B."/>
            <person name="Shatkay H."/>
            <person name="Dew I."/>
            <person name="Miller J.R."/>
            <person name="Flanigan M.J."/>
            <person name="Edwards N.J."/>
            <person name="Bolanos R."/>
            <person name="Fasulo D."/>
            <person name="Halldorsson B.V."/>
            <person name="Hannenhalli S."/>
            <person name="Turner R."/>
            <person name="Yooseph S."/>
            <person name="Lu F."/>
            <person name="Nusskern D.R."/>
            <person name="Shue B.C."/>
            <person name="Zheng X.H."/>
            <person name="Zhong F."/>
            <person name="Delcher A.L."/>
            <person name="Huson D.H."/>
            <person name="Kravitz S.A."/>
            <person name="Mouchard L."/>
            <person name="Reinert K."/>
            <person name="Remington K.A."/>
            <person name="Clark A.G."/>
            <person name="Waterman M.S."/>
            <person name="Eichler E.E."/>
            <person name="Adams M.D."/>
            <person name="Hunkapiller M.W."/>
            <person name="Myers E.W."/>
            <person name="Venter J.C."/>
        </authorList>
    </citation>
    <scope>NUCLEOTIDE SEQUENCE [LARGE SCALE GENOMIC DNA]</scope>
</reference>
<reference key="9">
    <citation type="journal article" date="2004" name="Genome Res.">
        <title>The status, quality, and expansion of the NIH full-length cDNA project: the Mammalian Gene Collection (MGC).</title>
        <authorList>
            <consortium name="The MGC Project Team"/>
        </authorList>
    </citation>
    <scope>NUCLEOTIDE SEQUENCE [LARGE SCALE MRNA] (ISOFORMS 1 AND 3)</scope>
    <source>
        <tissue>Brain</tissue>
        <tissue>Colon</tissue>
        <tissue>Pancreas</tissue>
        <tissue>Skin</tissue>
    </source>
</reference>
<reference key="10">
    <citation type="journal article" date="2003" name="Nat. Biotechnol.">
        <title>Exploring proteomes and analyzing protein processing by mass spectrometric identification of sorted N-terminal peptides.</title>
        <authorList>
            <person name="Gevaert K."/>
            <person name="Goethals M."/>
            <person name="Martens L."/>
            <person name="Van Damme J."/>
            <person name="Staes A."/>
            <person name="Thomas G.R."/>
            <person name="Vandekerckhove J."/>
        </authorList>
    </citation>
    <scope>PROTEIN SEQUENCE OF 2-10</scope>
    <scope>ACETYLATION AT ALA-2</scope>
    <source>
        <tissue>Platelet</tissue>
    </source>
</reference>
<reference key="11">
    <citation type="journal article" date="2002" name="J. Med. Genet.">
        <title>Sorting nexin 3 (SNX3) is disrupted in a patient with a translocation t(6;13)(q21;q12) and microcephaly, microphthalmia, ectrodactyly, prognathism (MMEP) phenotype.</title>
        <authorList>
            <person name="Vervoort V.S."/>
            <person name="Viljoen D."/>
            <person name="Smart R."/>
            <person name="Suthers G."/>
            <person name="DuPont B.R."/>
            <person name="Abbott A."/>
            <person name="Schwartz C.E."/>
        </authorList>
    </citation>
    <scope>CHROMOSOMAL TRANSLOCATION</scope>
</reference>
<reference key="12">
    <citation type="journal article" date="2006" name="Cell">
        <title>Global, in vivo, and site-specific phosphorylation dynamics in signaling networks.</title>
        <authorList>
            <person name="Olsen J.V."/>
            <person name="Blagoev B."/>
            <person name="Gnad F."/>
            <person name="Macek B."/>
            <person name="Kumar C."/>
            <person name="Mortensen P."/>
            <person name="Mann M."/>
        </authorList>
    </citation>
    <scope>IDENTIFICATION BY MASS SPECTROMETRY [LARGE SCALE ANALYSIS]</scope>
    <source>
        <tissue>Cervix carcinoma</tissue>
    </source>
</reference>
<reference key="13">
    <citation type="journal article" date="2007" name="Acta Biochim. Biophys. Sin.">
        <title>Involvement of beta3A subunit of adaptor protein-3 in intracellular trafficking of receptor-like protein tyrosine phosphatase PCP-2.</title>
        <authorList>
            <person name="Dong H."/>
            <person name="Yuan H."/>
            <person name="Jin W."/>
            <person name="Shen Y."/>
            <person name="Xu X."/>
            <person name="Wang H.-Y."/>
        </authorList>
    </citation>
    <scope>INTERACTION WITH PTPRU</scope>
</reference>
<reference key="14">
    <citation type="journal article" date="2008" name="PLoS Biol.">
        <title>Hrs and SNX3 functions in sorting and membrane invagination within multivesicular bodies.</title>
        <authorList>
            <person name="Pons V."/>
            <person name="Luyet P.P."/>
            <person name="Morel E."/>
            <person name="Abrami L."/>
            <person name="van der Goot F.G."/>
            <person name="Parton R.G."/>
            <person name="Gruenberg J."/>
        </authorList>
    </citation>
    <scope>FUNCTION</scope>
</reference>
<reference key="15">
    <citation type="journal article" date="2008" name="Proc. Natl. Acad. Sci. U.S.A.">
        <title>A quantitative atlas of mitotic phosphorylation.</title>
        <authorList>
            <person name="Dephoure N."/>
            <person name="Zhou C."/>
            <person name="Villen J."/>
            <person name="Beausoleil S.A."/>
            <person name="Bakalarski C.E."/>
            <person name="Elledge S.J."/>
            <person name="Gygi S.P."/>
        </authorList>
    </citation>
    <scope>PHOSPHORYLATION [LARGE SCALE ANALYSIS] AT SER-72</scope>
    <scope>IDENTIFICATION BY MASS SPECTROMETRY [LARGE SCALE ANALYSIS]</scope>
    <source>
        <tissue>Cervix carcinoma</tissue>
    </source>
</reference>
<reference key="16">
    <citation type="journal article" date="2009" name="Anal. Chem.">
        <title>Lys-N and trypsin cover complementary parts of the phosphoproteome in a refined SCX-based approach.</title>
        <authorList>
            <person name="Gauci S."/>
            <person name="Helbig A.O."/>
            <person name="Slijper M."/>
            <person name="Krijgsveld J."/>
            <person name="Heck A.J."/>
            <person name="Mohammed S."/>
        </authorList>
    </citation>
    <scope>ACETYLATION [LARGE SCALE ANALYSIS] AT ALA-2</scope>
    <scope>CLEAVAGE OF INITIATOR METHIONINE [LARGE SCALE ANALYSIS]</scope>
    <scope>IDENTIFICATION BY MASS SPECTROMETRY [LARGE SCALE ANALYSIS]</scope>
</reference>
<reference key="17">
    <citation type="journal article" date="2010" name="Cell. Microbiol.">
        <title>Sorting nexin 3 (SNX3) is a component of a tubular endosomal network induced by Salmonella and involved in maturation of the Salmonella-containing vacuole.</title>
        <authorList>
            <person name="Braun V."/>
            <person name="Wong A."/>
            <person name="Landekic M."/>
            <person name="Hong W.J."/>
            <person name="Grinstein S."/>
            <person name="Brumell J.H."/>
        </authorList>
    </citation>
    <scope>FUNCTION</scope>
    <scope>SUBCELLULAR LOCATION</scope>
</reference>
<reference key="18">
    <citation type="journal article" date="2010" name="Sci. Signal.">
        <title>Quantitative phosphoproteomics reveals widespread full phosphorylation site occupancy during mitosis.</title>
        <authorList>
            <person name="Olsen J.V."/>
            <person name="Vermeulen M."/>
            <person name="Santamaria A."/>
            <person name="Kumar C."/>
            <person name="Miller M.L."/>
            <person name="Jensen L.J."/>
            <person name="Gnad F."/>
            <person name="Cox J."/>
            <person name="Jensen T.S."/>
            <person name="Nigg E.A."/>
            <person name="Brunak S."/>
            <person name="Mann M."/>
        </authorList>
    </citation>
    <scope>PHOSPHORYLATION [LARGE SCALE ANALYSIS] AT SER-72</scope>
    <scope>IDENTIFICATION BY MASS SPECTROMETRY [LARGE SCALE ANALYSIS]</scope>
    <source>
        <tissue>Cervix carcinoma</tissue>
    </source>
</reference>
<reference key="19">
    <citation type="journal article" date="2011" name="BMC Syst. Biol.">
        <title>Initial characterization of the human central proteome.</title>
        <authorList>
            <person name="Burkard T.R."/>
            <person name="Planyavsky M."/>
            <person name="Kaupe I."/>
            <person name="Breitwieser F.P."/>
            <person name="Buerckstuemmer T."/>
            <person name="Bennett K.L."/>
            <person name="Superti-Furga G."/>
            <person name="Colinge J."/>
        </authorList>
    </citation>
    <scope>IDENTIFICATION BY MASS SPECTROMETRY [LARGE SCALE ANALYSIS]</scope>
</reference>
<reference key="20">
    <citation type="journal article" date="2011" name="Nat. Cell Biol.">
        <title>A SNX3-dependent retromer pathway mediates retrograde transport of the Wnt sorting receptor Wntless and is required for Wnt secretion.</title>
        <authorList>
            <person name="Harterink M."/>
            <person name="Port F."/>
            <person name="Lorenowicz M.J."/>
            <person name="McGough I.J."/>
            <person name="Silhankova M."/>
            <person name="Betist M.C."/>
            <person name="van Weering J.R."/>
            <person name="van Heesbeen R.G."/>
            <person name="Middelkoop T.C."/>
            <person name="Basler K."/>
            <person name="Cullen P.J."/>
            <person name="Korswagen H.C."/>
        </authorList>
    </citation>
    <scope>FUNCTION</scope>
    <scope>INTERACTION WITH VPS26 AND VPS35</scope>
    <scope>FUNCTION OF THE SNX3-RETROMER</scope>
    <scope>SUBCELLULAR LOCATION</scope>
</reference>
<reference key="21">
    <citation type="journal article" date="2013" name="Immunology">
        <title>SNX3 recruits to phagosomes and negatively regulates phagocytosis in dendritic cells.</title>
        <authorList>
            <person name="Chua R.Y."/>
            <person name="Wong S.H."/>
        </authorList>
    </citation>
    <scope>FUNCTION</scope>
    <scope>SUBCELLULAR LOCATION</scope>
</reference>
<reference key="22">
    <citation type="journal article" date="2013" name="J. Proteome Res.">
        <title>Toward a comprehensive characterization of a human cancer cell phosphoproteome.</title>
        <authorList>
            <person name="Zhou H."/>
            <person name="Di Palma S."/>
            <person name="Preisinger C."/>
            <person name="Peng M."/>
            <person name="Polat A.N."/>
            <person name="Heck A.J."/>
            <person name="Mohammed S."/>
        </authorList>
    </citation>
    <scope>PHOSPHORYLATION [LARGE SCALE ANALYSIS] AT SER-72</scope>
    <scope>IDENTIFICATION BY MASS SPECTROMETRY [LARGE SCALE ANALYSIS]</scope>
    <source>
        <tissue>Cervix carcinoma</tissue>
    </source>
</reference>
<reference key="23">
    <citation type="journal article" date="2014" name="J. Proteomics">
        <title>An enzyme assisted RP-RPLC approach for in-depth analysis of human liver phosphoproteome.</title>
        <authorList>
            <person name="Bian Y."/>
            <person name="Song C."/>
            <person name="Cheng K."/>
            <person name="Dong M."/>
            <person name="Wang F."/>
            <person name="Huang J."/>
            <person name="Sun D."/>
            <person name="Wang L."/>
            <person name="Ye M."/>
            <person name="Zou H."/>
        </authorList>
    </citation>
    <scope>IDENTIFICATION BY MASS SPECTROMETRY [LARGE SCALE ANALYSIS]</scope>
    <source>
        <tissue>Liver</tissue>
    </source>
</reference>
<reference key="24">
    <citation type="journal article" date="2014" name="Mol. Cell. Proteomics">
        <title>Rapid mapping of interactions between Human SNX-BAR proteins measured in vitro by AlphaScreen and single-molecule spectroscopy.</title>
        <authorList>
            <person name="Sierecki E."/>
            <person name="Stevers L.M."/>
            <person name="Giles N."/>
            <person name="Polinkovsky M.E."/>
            <person name="Moustaqil M."/>
            <person name="Mureev S."/>
            <person name="Johnston W.A."/>
            <person name="Dahmer-Heath M."/>
            <person name="Skalamera D."/>
            <person name="Gonda T.J."/>
            <person name="Gabrielli B."/>
            <person name="Collins B.M."/>
            <person name="Alexandrov K."/>
            <person name="Gambin Y."/>
        </authorList>
    </citation>
    <scope>INTERACTION WITH SNX8</scope>
</reference>
<reference key="25">
    <citation type="journal article" date="2014" name="Mol. Cell. Proteomics">
        <title>Immunoaffinity enrichment and mass spectrometry analysis of protein methylation.</title>
        <authorList>
            <person name="Guo A."/>
            <person name="Gu H."/>
            <person name="Zhou J."/>
            <person name="Mulhern D."/>
            <person name="Wang Y."/>
            <person name="Lee K.A."/>
            <person name="Yang V."/>
            <person name="Aguiar M."/>
            <person name="Kornhauser J."/>
            <person name="Jia X."/>
            <person name="Ren J."/>
            <person name="Beausoleil S.A."/>
            <person name="Silva J.C."/>
            <person name="Vemulapalli V."/>
            <person name="Bedford M.T."/>
            <person name="Comb M.J."/>
        </authorList>
    </citation>
    <scope>METHYLATION [LARGE SCALE ANALYSIS] AT ARG-43</scope>
    <scope>IDENTIFICATION BY MASS SPECTROMETRY [LARGE SCALE ANALYSIS]</scope>
    <source>
        <tissue>Colon carcinoma</tissue>
    </source>
</reference>
<reference key="26">
    <citation type="journal article" date="2014" name="Proc. Natl. Acad. Sci. U.S.A.">
        <title>A mechanism for retromer endosomal coat complex assembly with cargo.</title>
        <authorList>
            <person name="Harrison M.S."/>
            <person name="Hung C.S."/>
            <person name="Liu T.T."/>
            <person name="Christiano R."/>
            <person name="Walther T.C."/>
            <person name="Burd C.G."/>
        </authorList>
    </citation>
    <scope>FUNCTION</scope>
    <scope>INTERACTION WITH VPS26A:VPS35:VPS29 COMPLEX</scope>
    <scope>MUTAGENESIS OF PHE-28; GLU-30 AND ASP-32</scope>
</reference>
<reference key="27">
    <citation type="journal article" date="2015" name="Proteomics">
        <title>N-terminome analysis of the human mitochondrial proteome.</title>
        <authorList>
            <person name="Vaca Jacome A.S."/>
            <person name="Rabilloud T."/>
            <person name="Schaeffer-Reiss C."/>
            <person name="Rompais M."/>
            <person name="Ayoub D."/>
            <person name="Lane L."/>
            <person name="Bairoch A."/>
            <person name="Van Dorsselaer A."/>
            <person name="Carapito C."/>
        </authorList>
    </citation>
    <scope>ACETYLATION [LARGE SCALE ANALYSIS] AT ALA-2</scope>
    <scope>CLEAVAGE OF INITIATOR METHIONINE [LARGE SCALE ANALYSIS]</scope>
    <scope>IDENTIFICATION BY MASS SPECTROMETRY [LARGE SCALE ANALYSIS]</scope>
</reference>
<reference key="28">
    <citation type="journal article" date="2017" name="Nat. Struct. Mol. Biol.">
        <title>Site-specific mapping of the human SUMO proteome reveals co-modification with phosphorylation.</title>
        <authorList>
            <person name="Hendriks I.A."/>
            <person name="Lyon D."/>
            <person name="Young C."/>
            <person name="Jensen L.J."/>
            <person name="Vertegaal A.C."/>
            <person name="Nielsen M.L."/>
        </authorList>
    </citation>
    <scope>SUMOYLATION [LARGE SCALE ANALYSIS] AT LYS-95</scope>
    <scope>IDENTIFICATION BY MASS SPECTROMETRY [LARGE SCALE ANALYSIS]</scope>
</reference>
<reference key="29">
    <citation type="journal article" date="2018" name="Nat. Commun.">
        <title>SNX3-retromer requires an evolutionary conserved MON2:DOPEY2:ATP9A complex to mediate Wntless sorting and Wnt secretion.</title>
        <authorList>
            <person name="McGough I.J."/>
            <person name="de Groot R.E.A."/>
            <person name="Jellett A.P."/>
            <person name="Betist M.C."/>
            <person name="Varandas K.C."/>
            <person name="Danson C.M."/>
            <person name="Heesom K.J."/>
            <person name="Korswagen H.C."/>
            <person name="Cullen P.J."/>
        </authorList>
    </citation>
    <scope>FUNCTION</scope>
    <scope>INTERACTION WITH VPS26A:VPS35:VPS29 COMPLEX</scope>
    <scope>INTERACTION WITH MON2 AND DOP1B</scope>
    <scope>IDENTIFICATION BY MASS SPECTROMETRY</scope>
    <scope>SUBCELLULAR LOCATION</scope>
    <scope>MUTAGENESIS OF 9-ARG-ARG-10; TYR-22; 22-TYR--PHE-28; 30-GLU--ASP-32; GLU-50; GLU-75; 84-GLU--LYS-86; 99-ARG--PHE-110; TYR-154; PRO-156 AND ARG-160</scope>
</reference>
<reference key="30">
    <citation type="submission" date="2013-03" db="PDB data bank">
        <title>Crystal structure of the PX domain of human sorting nexin 3.</title>
        <authorList>
            <consortium name="Structural genomics consortium (SGC)"/>
        </authorList>
    </citation>
    <scope>X-RAY CRYSTALLOGRAPHY (2.6 ANGSTROMS) OF 24-155</scope>
</reference>